<sequence length="444" mass="49802">MLNIFKPAPHIERLDDSKMDAAYKRLRLQVFIGIFIGYAGYYLLRKNFAFAIPYLQEQGFSKTELGLVLAAVSIAYGFSKFIMGMVSDRCNPRYFLATGLFLSAIVNILFVSMPWVTSSVTIMFIFMFINGWFQGMGWPPCGRTMAHWFSISERGTKMSIWNVAHNIGGGILAPLVTLGIAMFVTWKSVFFFPAIIAIIISFLIVLLVRDTPQSCGLPPIEEYRNDYPKHAFKNQEKELTTKEILFQYVLNNKFLWYIAFANVFVYFVRYGVVDWAPTYLTEAKGFSPEDSRWSYFLYEYAGIPGTILCGWISDRFFKSRRAPAGVLFMAGVFIAVLVYWLNPAGNPLVDNIALISIGFLIYGPVMLIGLQAIDLAPKKAAGTAAGLTGFFGYIGGSAFANAIMGFVVDRFNWNGGFIMLISSCILAIVFLALTWNTGKRAEHV</sequence>
<evidence type="ECO:0000250" key="1"/>
<evidence type="ECO:0000305" key="2"/>
<feature type="chain" id="PRO_0000199877" description="Glycerol-3-phosphate transporter">
    <location>
        <begin position="1"/>
        <end position="444"/>
    </location>
</feature>
<feature type="topological domain" description="Cytoplasmic" evidence="1">
    <location>
        <begin position="1"/>
        <end position="36"/>
    </location>
</feature>
<feature type="transmembrane region" description="Helical; Name=1" evidence="1">
    <location>
        <begin position="37"/>
        <end position="57"/>
    </location>
</feature>
<feature type="topological domain" description="Extracellular" evidence="1">
    <location>
        <begin position="58"/>
        <end position="63"/>
    </location>
</feature>
<feature type="transmembrane region" description="Helical; Name=2" evidence="1">
    <location>
        <begin position="64"/>
        <end position="84"/>
    </location>
</feature>
<feature type="topological domain" description="Cytoplasmic" evidence="1">
    <location>
        <begin position="85"/>
        <end position="93"/>
    </location>
</feature>
<feature type="transmembrane region" description="Helical; Name=3" evidence="1">
    <location>
        <begin position="94"/>
        <end position="112"/>
    </location>
</feature>
<feature type="topological domain" description="Extracellular" evidence="1">
    <location>
        <begin position="113"/>
        <end position="120"/>
    </location>
</feature>
<feature type="transmembrane region" description="Helical; Name=4" evidence="1">
    <location>
        <begin position="121"/>
        <end position="141"/>
    </location>
</feature>
<feature type="topological domain" description="Cytoplasmic" evidence="1">
    <location>
        <begin position="142"/>
        <end position="160"/>
    </location>
</feature>
<feature type="transmembrane region" description="Helical; Name=5" evidence="1">
    <location>
        <begin position="161"/>
        <end position="180"/>
    </location>
</feature>
<feature type="topological domain" description="Extracellular" evidence="1">
    <location>
        <begin position="181"/>
        <end position="189"/>
    </location>
</feature>
<feature type="transmembrane region" description="Helical; Name=6" evidence="1">
    <location>
        <begin position="190"/>
        <end position="207"/>
    </location>
</feature>
<feature type="topological domain" description="Cytoplasmic" evidence="1">
    <location>
        <begin position="208"/>
        <end position="261"/>
    </location>
</feature>
<feature type="transmembrane region" description="Helical; Name=7" evidence="1">
    <location>
        <begin position="262"/>
        <end position="282"/>
    </location>
</feature>
<feature type="topological domain" description="Extracellular" evidence="1">
    <location>
        <begin position="283"/>
        <end position="287"/>
    </location>
</feature>
<feature type="transmembrane region" description="Helical; Name=8" evidence="1">
    <location>
        <begin position="288"/>
        <end position="308"/>
    </location>
</feature>
<feature type="topological domain" description="Cytoplasmic" evidence="1">
    <location>
        <begin position="309"/>
        <end position="321"/>
    </location>
</feature>
<feature type="transmembrane region" description="Helical; Name=9" evidence="1">
    <location>
        <begin position="322"/>
        <end position="341"/>
    </location>
</feature>
<feature type="topological domain" description="Extracellular" evidence="1">
    <location>
        <begin position="342"/>
        <end position="346"/>
    </location>
</feature>
<feature type="transmembrane region" description="Helical; Name=10" evidence="1">
    <location>
        <begin position="347"/>
        <end position="368"/>
    </location>
</feature>
<feature type="topological domain" description="Cytoplasmic" evidence="1">
    <location>
        <begin position="369"/>
        <end position="387"/>
    </location>
</feature>
<feature type="transmembrane region" description="Helical; Name=11" evidence="1">
    <location>
        <begin position="388"/>
        <end position="409"/>
    </location>
</feature>
<feature type="topological domain" description="Extracellular" evidence="1">
    <location>
        <begin position="410"/>
        <end position="414"/>
    </location>
</feature>
<feature type="transmembrane region" description="Helical; Name=12" evidence="1">
    <location>
        <begin position="415"/>
        <end position="435"/>
    </location>
</feature>
<feature type="topological domain" description="Cytoplasmic" evidence="1">
    <location>
        <begin position="436"/>
        <end position="444"/>
    </location>
</feature>
<accession>P37948</accession>
<reference key="1">
    <citation type="journal article" date="1994" name="Microbiology">
        <title>The glpT and glpQ genes of the glycerol regulon in Bacillus subtilis.</title>
        <authorList>
            <person name="Nilsson R.P."/>
            <person name="Beijer L."/>
            <person name="Rutberg B."/>
        </authorList>
    </citation>
    <scope>NUCLEOTIDE SEQUENCE [GENOMIC DNA]</scope>
    <source>
        <strain>168 / BR95</strain>
    </source>
</reference>
<reference key="2">
    <citation type="submission" date="1997-07" db="EMBL/GenBank/DDBJ databases">
        <title>Sequence analysis of the 70kb region between 17 and 23 degree of the Bacillus subtilis chromosome.</title>
        <authorList>
            <person name="Haga K."/>
            <person name="Liu H."/>
            <person name="Yasumoto K."/>
            <person name="Takahashi H."/>
            <person name="Yoshikawa H."/>
        </authorList>
    </citation>
    <scope>NUCLEOTIDE SEQUENCE [GENOMIC DNA]</scope>
    <source>
        <strain>168</strain>
    </source>
</reference>
<reference key="3">
    <citation type="journal article" date="1997" name="Nature">
        <title>The complete genome sequence of the Gram-positive bacterium Bacillus subtilis.</title>
        <authorList>
            <person name="Kunst F."/>
            <person name="Ogasawara N."/>
            <person name="Moszer I."/>
            <person name="Albertini A.M."/>
            <person name="Alloni G."/>
            <person name="Azevedo V."/>
            <person name="Bertero M.G."/>
            <person name="Bessieres P."/>
            <person name="Bolotin A."/>
            <person name="Borchert S."/>
            <person name="Borriss R."/>
            <person name="Boursier L."/>
            <person name="Brans A."/>
            <person name="Braun M."/>
            <person name="Brignell S.C."/>
            <person name="Bron S."/>
            <person name="Brouillet S."/>
            <person name="Bruschi C.V."/>
            <person name="Caldwell B."/>
            <person name="Capuano V."/>
            <person name="Carter N.M."/>
            <person name="Choi S.-K."/>
            <person name="Codani J.-J."/>
            <person name="Connerton I.F."/>
            <person name="Cummings N.J."/>
            <person name="Daniel R.A."/>
            <person name="Denizot F."/>
            <person name="Devine K.M."/>
            <person name="Duesterhoeft A."/>
            <person name="Ehrlich S.D."/>
            <person name="Emmerson P.T."/>
            <person name="Entian K.-D."/>
            <person name="Errington J."/>
            <person name="Fabret C."/>
            <person name="Ferrari E."/>
            <person name="Foulger D."/>
            <person name="Fritz C."/>
            <person name="Fujita M."/>
            <person name="Fujita Y."/>
            <person name="Fuma S."/>
            <person name="Galizzi A."/>
            <person name="Galleron N."/>
            <person name="Ghim S.-Y."/>
            <person name="Glaser P."/>
            <person name="Goffeau A."/>
            <person name="Golightly E.J."/>
            <person name="Grandi G."/>
            <person name="Guiseppi G."/>
            <person name="Guy B.J."/>
            <person name="Haga K."/>
            <person name="Haiech J."/>
            <person name="Harwood C.R."/>
            <person name="Henaut A."/>
            <person name="Hilbert H."/>
            <person name="Holsappel S."/>
            <person name="Hosono S."/>
            <person name="Hullo M.-F."/>
            <person name="Itaya M."/>
            <person name="Jones L.-M."/>
            <person name="Joris B."/>
            <person name="Karamata D."/>
            <person name="Kasahara Y."/>
            <person name="Klaerr-Blanchard M."/>
            <person name="Klein C."/>
            <person name="Kobayashi Y."/>
            <person name="Koetter P."/>
            <person name="Koningstein G."/>
            <person name="Krogh S."/>
            <person name="Kumano M."/>
            <person name="Kurita K."/>
            <person name="Lapidus A."/>
            <person name="Lardinois S."/>
            <person name="Lauber J."/>
            <person name="Lazarevic V."/>
            <person name="Lee S.-M."/>
            <person name="Levine A."/>
            <person name="Liu H."/>
            <person name="Masuda S."/>
            <person name="Mauel C."/>
            <person name="Medigue C."/>
            <person name="Medina N."/>
            <person name="Mellado R.P."/>
            <person name="Mizuno M."/>
            <person name="Moestl D."/>
            <person name="Nakai S."/>
            <person name="Noback M."/>
            <person name="Noone D."/>
            <person name="O'Reilly M."/>
            <person name="Ogawa K."/>
            <person name="Ogiwara A."/>
            <person name="Oudega B."/>
            <person name="Park S.-H."/>
            <person name="Parro V."/>
            <person name="Pohl T.M."/>
            <person name="Portetelle D."/>
            <person name="Porwollik S."/>
            <person name="Prescott A.M."/>
            <person name="Presecan E."/>
            <person name="Pujic P."/>
            <person name="Purnelle B."/>
            <person name="Rapoport G."/>
            <person name="Rey M."/>
            <person name="Reynolds S."/>
            <person name="Rieger M."/>
            <person name="Rivolta C."/>
            <person name="Rocha E."/>
            <person name="Roche B."/>
            <person name="Rose M."/>
            <person name="Sadaie Y."/>
            <person name="Sato T."/>
            <person name="Scanlan E."/>
            <person name="Schleich S."/>
            <person name="Schroeter R."/>
            <person name="Scoffone F."/>
            <person name="Sekiguchi J."/>
            <person name="Sekowska A."/>
            <person name="Seror S.J."/>
            <person name="Serror P."/>
            <person name="Shin B.-S."/>
            <person name="Soldo B."/>
            <person name="Sorokin A."/>
            <person name="Tacconi E."/>
            <person name="Takagi T."/>
            <person name="Takahashi H."/>
            <person name="Takemaru K."/>
            <person name="Takeuchi M."/>
            <person name="Tamakoshi A."/>
            <person name="Tanaka T."/>
            <person name="Terpstra P."/>
            <person name="Tognoni A."/>
            <person name="Tosato V."/>
            <person name="Uchiyama S."/>
            <person name="Vandenbol M."/>
            <person name="Vannier F."/>
            <person name="Vassarotti A."/>
            <person name="Viari A."/>
            <person name="Wambutt R."/>
            <person name="Wedler E."/>
            <person name="Wedler H."/>
            <person name="Weitzenegger T."/>
            <person name="Winters P."/>
            <person name="Wipat A."/>
            <person name="Yamamoto H."/>
            <person name="Yamane K."/>
            <person name="Yasumoto K."/>
            <person name="Yata K."/>
            <person name="Yoshida K."/>
            <person name="Yoshikawa H.-F."/>
            <person name="Zumstein E."/>
            <person name="Yoshikawa H."/>
            <person name="Danchin A."/>
        </authorList>
    </citation>
    <scope>NUCLEOTIDE SEQUENCE [LARGE SCALE GENOMIC DNA]</scope>
    <source>
        <strain>168</strain>
    </source>
</reference>
<proteinExistence type="inferred from homology"/>
<comment type="function">
    <text>Responsible for glycerol-3-phosphate uptake.</text>
</comment>
<comment type="subcellular location">
    <subcellularLocation>
        <location>Cell membrane</location>
        <topology>Multi-pass membrane protein</topology>
    </subcellularLocation>
</comment>
<comment type="similarity">
    <text evidence="2">Belongs to the major facilitator superfamily. Organophosphate:Pi antiporter (OPA) (TC 2.A.1.4) family.</text>
</comment>
<name>GLPT_BACSU</name>
<organism>
    <name type="scientific">Bacillus subtilis (strain 168)</name>
    <dbReference type="NCBI Taxonomy" id="224308"/>
    <lineage>
        <taxon>Bacteria</taxon>
        <taxon>Bacillati</taxon>
        <taxon>Bacillota</taxon>
        <taxon>Bacilli</taxon>
        <taxon>Bacillales</taxon>
        <taxon>Bacillaceae</taxon>
        <taxon>Bacillus</taxon>
    </lineage>
</organism>
<keyword id="KW-1003">Cell membrane</keyword>
<keyword id="KW-0319">Glycerol metabolism</keyword>
<keyword id="KW-0472">Membrane</keyword>
<keyword id="KW-1185">Reference proteome</keyword>
<keyword id="KW-0812">Transmembrane</keyword>
<keyword id="KW-1133">Transmembrane helix</keyword>
<keyword id="KW-0813">Transport</keyword>
<protein>
    <recommendedName>
        <fullName>Glycerol-3-phosphate transporter</fullName>
        <shortName>G-3-P transporter</shortName>
    </recommendedName>
    <alternativeName>
        <fullName>G-3-P permease</fullName>
    </alternativeName>
</protein>
<dbReference type="EMBL" id="Z26522">
    <property type="protein sequence ID" value="CAA81291.1"/>
    <property type="molecule type" value="Genomic_DNA"/>
</dbReference>
<dbReference type="EMBL" id="AB006424">
    <property type="protein sequence ID" value="BAA33111.1"/>
    <property type="molecule type" value="Genomic_DNA"/>
</dbReference>
<dbReference type="EMBL" id="AL009126">
    <property type="protein sequence ID" value="CAB12008.1"/>
    <property type="molecule type" value="Genomic_DNA"/>
</dbReference>
<dbReference type="PIR" id="I40417">
    <property type="entry name" value="I40417"/>
</dbReference>
<dbReference type="RefSeq" id="NP_388096.1">
    <property type="nucleotide sequence ID" value="NC_000964.3"/>
</dbReference>
<dbReference type="RefSeq" id="WP_003246460.1">
    <property type="nucleotide sequence ID" value="NZ_OZ025638.1"/>
</dbReference>
<dbReference type="SMR" id="P37948"/>
<dbReference type="FunCoup" id="P37948">
    <property type="interactions" value="186"/>
</dbReference>
<dbReference type="STRING" id="224308.BSU02140"/>
<dbReference type="PaxDb" id="224308-BSU02140"/>
<dbReference type="EnsemblBacteria" id="CAB12008">
    <property type="protein sequence ID" value="CAB12008"/>
    <property type="gene ID" value="BSU_02140"/>
</dbReference>
<dbReference type="GeneID" id="938447"/>
<dbReference type="KEGG" id="bsu:BSU02140"/>
<dbReference type="PATRIC" id="fig|224308.179.peg.220"/>
<dbReference type="eggNOG" id="COG2271">
    <property type="taxonomic scope" value="Bacteria"/>
</dbReference>
<dbReference type="InParanoid" id="P37948"/>
<dbReference type="OrthoDB" id="9766638at2"/>
<dbReference type="PhylomeDB" id="P37948"/>
<dbReference type="BioCyc" id="BSUB:BSU02140-MONOMER"/>
<dbReference type="Proteomes" id="UP000001570">
    <property type="component" value="Chromosome"/>
</dbReference>
<dbReference type="GO" id="GO:0005886">
    <property type="term" value="C:plasma membrane"/>
    <property type="evidence" value="ECO:0000318"/>
    <property type="project" value="GO_Central"/>
</dbReference>
<dbReference type="GO" id="GO:0061513">
    <property type="term" value="F:glucose 6-phosphate:phosphate antiporter activity"/>
    <property type="evidence" value="ECO:0000318"/>
    <property type="project" value="GO_Central"/>
</dbReference>
<dbReference type="GO" id="GO:0015169">
    <property type="term" value="F:glycerol-3-phosphate transmembrane transporter activity"/>
    <property type="evidence" value="ECO:0007669"/>
    <property type="project" value="InterPro"/>
</dbReference>
<dbReference type="GO" id="GO:0015760">
    <property type="term" value="P:glucose-6-phosphate transport"/>
    <property type="evidence" value="ECO:0000318"/>
    <property type="project" value="GO_Central"/>
</dbReference>
<dbReference type="GO" id="GO:0006071">
    <property type="term" value="P:glycerol metabolic process"/>
    <property type="evidence" value="ECO:0007669"/>
    <property type="project" value="UniProtKB-KW"/>
</dbReference>
<dbReference type="GO" id="GO:0035435">
    <property type="term" value="P:phosphate ion transmembrane transport"/>
    <property type="evidence" value="ECO:0000318"/>
    <property type="project" value="GO_Central"/>
</dbReference>
<dbReference type="CDD" id="cd17345">
    <property type="entry name" value="MFS_GlpT"/>
    <property type="match status" value="1"/>
</dbReference>
<dbReference type="FunFam" id="1.20.1250.20:FF:000007">
    <property type="entry name" value="Glycerol-3-phosphate transporter"/>
    <property type="match status" value="1"/>
</dbReference>
<dbReference type="Gene3D" id="1.20.1250.20">
    <property type="entry name" value="MFS general substrate transporter like domains"/>
    <property type="match status" value="2"/>
</dbReference>
<dbReference type="InterPro" id="IPR005267">
    <property type="entry name" value="G3P_transporter"/>
</dbReference>
<dbReference type="InterPro" id="IPR011701">
    <property type="entry name" value="MFS"/>
</dbReference>
<dbReference type="InterPro" id="IPR020846">
    <property type="entry name" value="MFS_dom"/>
</dbReference>
<dbReference type="InterPro" id="IPR036259">
    <property type="entry name" value="MFS_trans_sf"/>
</dbReference>
<dbReference type="InterPro" id="IPR051337">
    <property type="entry name" value="OPA_Antiporter"/>
</dbReference>
<dbReference type="InterPro" id="IPR021159">
    <property type="entry name" value="Sugar-P_transporter_CS"/>
</dbReference>
<dbReference type="InterPro" id="IPR000849">
    <property type="entry name" value="Sugar_P_transporter"/>
</dbReference>
<dbReference type="NCBIfam" id="TIGR00881">
    <property type="entry name" value="2A0104"/>
    <property type="match status" value="1"/>
</dbReference>
<dbReference type="NCBIfam" id="TIGR00712">
    <property type="entry name" value="glpT"/>
    <property type="match status" value="1"/>
</dbReference>
<dbReference type="PANTHER" id="PTHR43826">
    <property type="entry name" value="GLUCOSE-6-PHOSPHATE EXCHANGER SLC37A4"/>
    <property type="match status" value="1"/>
</dbReference>
<dbReference type="PANTHER" id="PTHR43826:SF6">
    <property type="entry name" value="GLYCEROL-3-PHOSPHATE TRANSPORTER"/>
    <property type="match status" value="1"/>
</dbReference>
<dbReference type="Pfam" id="PF07690">
    <property type="entry name" value="MFS_1"/>
    <property type="match status" value="1"/>
</dbReference>
<dbReference type="PIRSF" id="PIRSF002808">
    <property type="entry name" value="Hexose_phosphate_transp"/>
    <property type="match status" value="1"/>
</dbReference>
<dbReference type="SUPFAM" id="SSF103473">
    <property type="entry name" value="MFS general substrate transporter"/>
    <property type="match status" value="1"/>
</dbReference>
<dbReference type="PROSITE" id="PS00942">
    <property type="entry name" value="GLPT"/>
    <property type="match status" value="1"/>
</dbReference>
<dbReference type="PROSITE" id="PS50850">
    <property type="entry name" value="MFS"/>
    <property type="match status" value="1"/>
</dbReference>
<gene>
    <name type="primary">glpT</name>
    <name type="synonym">ybeE</name>
    <name type="ordered locus">BSU02140</name>
</gene>